<comment type="catalytic activity">
    <reaction evidence="1">
        <text>1-(2-carboxyphenylamino)-1-deoxy-D-ribulose 5-phosphate + H(+) = (1S,2R)-1-C-(indol-3-yl)glycerol 3-phosphate + CO2 + H2O</text>
        <dbReference type="Rhea" id="RHEA:23476"/>
        <dbReference type="ChEBI" id="CHEBI:15377"/>
        <dbReference type="ChEBI" id="CHEBI:15378"/>
        <dbReference type="ChEBI" id="CHEBI:16526"/>
        <dbReference type="ChEBI" id="CHEBI:58613"/>
        <dbReference type="ChEBI" id="CHEBI:58866"/>
        <dbReference type="EC" id="4.1.1.48"/>
    </reaction>
</comment>
<comment type="pathway">
    <text evidence="1">Amino-acid biosynthesis; L-tryptophan biosynthesis; L-tryptophan from chorismate: step 4/5.</text>
</comment>
<comment type="similarity">
    <text evidence="1">Belongs to the TrpC family.</text>
</comment>
<feature type="chain" id="PRO_1000018478" description="Indole-3-glycerol phosphate synthase">
    <location>
        <begin position="1"/>
        <end position="259"/>
    </location>
</feature>
<dbReference type="EC" id="4.1.1.48" evidence="1"/>
<dbReference type="EMBL" id="AJ965256">
    <property type="protein sequence ID" value="CAI83474.1"/>
    <property type="molecule type" value="Genomic_DNA"/>
</dbReference>
<dbReference type="RefSeq" id="WP_011309823.1">
    <property type="nucleotide sequence ID" value="NC_007356.1"/>
</dbReference>
<dbReference type="SMR" id="Q3ZZ14"/>
<dbReference type="KEGG" id="deh:cbdbA1445"/>
<dbReference type="HOGENOM" id="CLU_034247_2_0_0"/>
<dbReference type="UniPathway" id="UPA00035">
    <property type="reaction ID" value="UER00043"/>
</dbReference>
<dbReference type="Proteomes" id="UP000000433">
    <property type="component" value="Chromosome"/>
</dbReference>
<dbReference type="GO" id="GO:0004425">
    <property type="term" value="F:indole-3-glycerol-phosphate synthase activity"/>
    <property type="evidence" value="ECO:0007669"/>
    <property type="project" value="UniProtKB-UniRule"/>
</dbReference>
<dbReference type="GO" id="GO:0004640">
    <property type="term" value="F:phosphoribosylanthranilate isomerase activity"/>
    <property type="evidence" value="ECO:0007669"/>
    <property type="project" value="TreeGrafter"/>
</dbReference>
<dbReference type="GO" id="GO:0000162">
    <property type="term" value="P:L-tryptophan biosynthetic process"/>
    <property type="evidence" value="ECO:0007669"/>
    <property type="project" value="UniProtKB-UniRule"/>
</dbReference>
<dbReference type="CDD" id="cd00331">
    <property type="entry name" value="IGPS"/>
    <property type="match status" value="1"/>
</dbReference>
<dbReference type="FunFam" id="3.20.20.70:FF:000024">
    <property type="entry name" value="Indole-3-glycerol phosphate synthase"/>
    <property type="match status" value="1"/>
</dbReference>
<dbReference type="Gene3D" id="3.20.20.70">
    <property type="entry name" value="Aldolase class I"/>
    <property type="match status" value="1"/>
</dbReference>
<dbReference type="HAMAP" id="MF_00134_B">
    <property type="entry name" value="IGPS_B"/>
    <property type="match status" value="1"/>
</dbReference>
<dbReference type="InterPro" id="IPR013785">
    <property type="entry name" value="Aldolase_TIM"/>
</dbReference>
<dbReference type="InterPro" id="IPR045186">
    <property type="entry name" value="Indole-3-glycerol_P_synth"/>
</dbReference>
<dbReference type="InterPro" id="IPR013798">
    <property type="entry name" value="Indole-3-glycerol_P_synth_dom"/>
</dbReference>
<dbReference type="InterPro" id="IPR001468">
    <property type="entry name" value="Indole-3-GlycerolPSynthase_CS"/>
</dbReference>
<dbReference type="InterPro" id="IPR011060">
    <property type="entry name" value="RibuloseP-bd_barrel"/>
</dbReference>
<dbReference type="NCBIfam" id="NF001377">
    <property type="entry name" value="PRK00278.2-4"/>
    <property type="match status" value="1"/>
</dbReference>
<dbReference type="PANTHER" id="PTHR22854:SF2">
    <property type="entry name" value="INDOLE-3-GLYCEROL-PHOSPHATE SYNTHASE"/>
    <property type="match status" value="1"/>
</dbReference>
<dbReference type="PANTHER" id="PTHR22854">
    <property type="entry name" value="TRYPTOPHAN BIOSYNTHESIS PROTEIN"/>
    <property type="match status" value="1"/>
</dbReference>
<dbReference type="Pfam" id="PF00218">
    <property type="entry name" value="IGPS"/>
    <property type="match status" value="1"/>
</dbReference>
<dbReference type="SUPFAM" id="SSF51366">
    <property type="entry name" value="Ribulose-phoshate binding barrel"/>
    <property type="match status" value="1"/>
</dbReference>
<dbReference type="PROSITE" id="PS00614">
    <property type="entry name" value="IGPS"/>
    <property type="match status" value="1"/>
</dbReference>
<keyword id="KW-0028">Amino-acid biosynthesis</keyword>
<keyword id="KW-0057">Aromatic amino acid biosynthesis</keyword>
<keyword id="KW-0210">Decarboxylase</keyword>
<keyword id="KW-0456">Lyase</keyword>
<keyword id="KW-0822">Tryptophan biosynthesis</keyword>
<sequence length="259" mass="28971">MILERIVTDNLPDLERRKMRLPLAKLQELVLDIPYPPIDMAMKLKGRQVRLIAEVKKASPSKGIIRSDFDPVDIAGIYARNGASAISVLTEEHHFMGSLDNLKKIRESGVASKLPLLRKDFIHDPYQVYESRLYGADAILLIVAMLSPERLQELLSLSHKLGMKCLVEVHTRSELEIALESNARIIGLNNRDLHTFKIDLTVTERLRPLIPPECIVVSESGIQTRADISRLEELGVDAVLVGEALTASVDIAAKMRELL</sequence>
<gene>
    <name evidence="1" type="primary">trpC</name>
    <name type="ordered locus">cbdbA1445</name>
</gene>
<proteinExistence type="inferred from homology"/>
<evidence type="ECO:0000255" key="1">
    <source>
        <dbReference type="HAMAP-Rule" id="MF_00134"/>
    </source>
</evidence>
<organism>
    <name type="scientific">Dehalococcoides mccartyi (strain CBDB1)</name>
    <dbReference type="NCBI Taxonomy" id="255470"/>
    <lineage>
        <taxon>Bacteria</taxon>
        <taxon>Bacillati</taxon>
        <taxon>Chloroflexota</taxon>
        <taxon>Dehalococcoidia</taxon>
        <taxon>Dehalococcoidales</taxon>
        <taxon>Dehalococcoidaceae</taxon>
        <taxon>Dehalococcoides</taxon>
    </lineage>
</organism>
<name>TRPC_DEHMC</name>
<protein>
    <recommendedName>
        <fullName evidence="1">Indole-3-glycerol phosphate synthase</fullName>
        <shortName evidence="1">IGPS</shortName>
        <ecNumber evidence="1">4.1.1.48</ecNumber>
    </recommendedName>
</protein>
<reference key="1">
    <citation type="journal article" date="2005" name="Nat. Biotechnol.">
        <title>Genome sequence of the chlorinated compound-respiring bacterium Dehalococcoides species strain CBDB1.</title>
        <authorList>
            <person name="Kube M."/>
            <person name="Beck A."/>
            <person name="Zinder S.H."/>
            <person name="Kuhl H."/>
            <person name="Reinhardt R."/>
            <person name="Adrian L."/>
        </authorList>
    </citation>
    <scope>NUCLEOTIDE SEQUENCE [LARGE SCALE GENOMIC DNA]</scope>
    <source>
        <strain>CBDB1</strain>
    </source>
</reference>
<accession>Q3ZZ14</accession>